<proteinExistence type="inferred from homology"/>
<protein>
    <recommendedName>
        <fullName evidence="1">Undecaprenyl-diphosphatase</fullName>
        <ecNumber evidence="1">3.6.1.27</ecNumber>
    </recommendedName>
    <alternativeName>
        <fullName evidence="1">Bacitracin resistance protein</fullName>
    </alternativeName>
    <alternativeName>
        <fullName evidence="1">Undecaprenyl pyrophosphate phosphatase</fullName>
    </alternativeName>
</protein>
<accession>B5FB78</accession>
<sequence length="267" mass="29434">MTYFEAFFLALLQGFTEFLPISSSAHLILPSAILGWPDQGLAFDVAVHVGTLAAVVIYFRKEVVTLLTAWVGSIVKKEHNKESNLAWLIVLATIPAALFGLLFKDFIEIYLRSAWVIAATTIVFGLLLWWVDKNATLAKDEYQMTWKKALFLGIAQAMAMIPGTSRSGITITAALYLGFTREAAARFSFLMSIPIITLAGSYLGLKLAMSDISIHLGLLSTGVIVSFISAYICIHFFLKLISSMGMMPFVIYRILLGSSLLVWLALH</sequence>
<keyword id="KW-0046">Antibiotic resistance</keyword>
<keyword id="KW-0997">Cell inner membrane</keyword>
<keyword id="KW-1003">Cell membrane</keyword>
<keyword id="KW-0133">Cell shape</keyword>
<keyword id="KW-0961">Cell wall biogenesis/degradation</keyword>
<keyword id="KW-0378">Hydrolase</keyword>
<keyword id="KW-0472">Membrane</keyword>
<keyword id="KW-0573">Peptidoglycan synthesis</keyword>
<keyword id="KW-0812">Transmembrane</keyword>
<keyword id="KW-1133">Transmembrane helix</keyword>
<reference key="1">
    <citation type="submission" date="2008-08" db="EMBL/GenBank/DDBJ databases">
        <title>Complete sequence of Vibrio fischeri strain MJ11.</title>
        <authorList>
            <person name="Mandel M.J."/>
            <person name="Stabb E.V."/>
            <person name="Ruby E.G."/>
            <person name="Ferriera S."/>
            <person name="Johnson J."/>
            <person name="Kravitz S."/>
            <person name="Beeson K."/>
            <person name="Sutton G."/>
            <person name="Rogers Y.-H."/>
            <person name="Friedman R."/>
            <person name="Frazier M."/>
            <person name="Venter J.C."/>
        </authorList>
    </citation>
    <scope>NUCLEOTIDE SEQUENCE [LARGE SCALE GENOMIC DNA]</scope>
    <source>
        <strain>MJ11</strain>
    </source>
</reference>
<feature type="chain" id="PRO_1000197419" description="Undecaprenyl-diphosphatase">
    <location>
        <begin position="1"/>
        <end position="267"/>
    </location>
</feature>
<feature type="transmembrane region" description="Helical" evidence="1">
    <location>
        <begin position="1"/>
        <end position="21"/>
    </location>
</feature>
<feature type="transmembrane region" description="Helical" evidence="1">
    <location>
        <begin position="39"/>
        <end position="59"/>
    </location>
</feature>
<feature type="transmembrane region" description="Helical" evidence="1">
    <location>
        <begin position="83"/>
        <end position="103"/>
    </location>
</feature>
<feature type="transmembrane region" description="Helical" evidence="1">
    <location>
        <begin position="111"/>
        <end position="131"/>
    </location>
</feature>
<feature type="transmembrane region" description="Helical" evidence="1">
    <location>
        <begin position="149"/>
        <end position="169"/>
    </location>
</feature>
<feature type="transmembrane region" description="Helical" evidence="1">
    <location>
        <begin position="189"/>
        <end position="209"/>
    </location>
</feature>
<feature type="transmembrane region" description="Helical" evidence="1">
    <location>
        <begin position="218"/>
        <end position="238"/>
    </location>
</feature>
<feature type="transmembrane region" description="Helical" evidence="1">
    <location>
        <begin position="246"/>
        <end position="266"/>
    </location>
</feature>
<evidence type="ECO:0000255" key="1">
    <source>
        <dbReference type="HAMAP-Rule" id="MF_01006"/>
    </source>
</evidence>
<dbReference type="EC" id="3.6.1.27" evidence="1"/>
<dbReference type="EMBL" id="CP001139">
    <property type="protein sequence ID" value="ACH65471.1"/>
    <property type="molecule type" value="Genomic_DNA"/>
</dbReference>
<dbReference type="RefSeq" id="WP_012533074.1">
    <property type="nucleotide sequence ID" value="NC_011184.1"/>
</dbReference>
<dbReference type="SMR" id="B5FB78"/>
<dbReference type="KEGG" id="vfm:VFMJ11_2356"/>
<dbReference type="HOGENOM" id="CLU_060296_1_0_6"/>
<dbReference type="Proteomes" id="UP000001857">
    <property type="component" value="Chromosome I"/>
</dbReference>
<dbReference type="GO" id="GO:0005886">
    <property type="term" value="C:plasma membrane"/>
    <property type="evidence" value="ECO:0007669"/>
    <property type="project" value="UniProtKB-SubCell"/>
</dbReference>
<dbReference type="GO" id="GO:0050380">
    <property type="term" value="F:undecaprenyl-diphosphatase activity"/>
    <property type="evidence" value="ECO:0007669"/>
    <property type="project" value="UniProtKB-UniRule"/>
</dbReference>
<dbReference type="GO" id="GO:0071555">
    <property type="term" value="P:cell wall organization"/>
    <property type="evidence" value="ECO:0007669"/>
    <property type="project" value="UniProtKB-KW"/>
</dbReference>
<dbReference type="GO" id="GO:0009252">
    <property type="term" value="P:peptidoglycan biosynthetic process"/>
    <property type="evidence" value="ECO:0007669"/>
    <property type="project" value="UniProtKB-KW"/>
</dbReference>
<dbReference type="GO" id="GO:0008360">
    <property type="term" value="P:regulation of cell shape"/>
    <property type="evidence" value="ECO:0007669"/>
    <property type="project" value="UniProtKB-KW"/>
</dbReference>
<dbReference type="GO" id="GO:0046677">
    <property type="term" value="P:response to antibiotic"/>
    <property type="evidence" value="ECO:0007669"/>
    <property type="project" value="UniProtKB-UniRule"/>
</dbReference>
<dbReference type="HAMAP" id="MF_01006">
    <property type="entry name" value="Undec_diphosphatase"/>
    <property type="match status" value="1"/>
</dbReference>
<dbReference type="InterPro" id="IPR003824">
    <property type="entry name" value="UppP"/>
</dbReference>
<dbReference type="NCBIfam" id="NF001393">
    <property type="entry name" value="PRK00281.2-4"/>
    <property type="match status" value="1"/>
</dbReference>
<dbReference type="NCBIfam" id="TIGR00753">
    <property type="entry name" value="undec_PP_bacA"/>
    <property type="match status" value="1"/>
</dbReference>
<dbReference type="PANTHER" id="PTHR30622">
    <property type="entry name" value="UNDECAPRENYL-DIPHOSPHATASE"/>
    <property type="match status" value="1"/>
</dbReference>
<dbReference type="PANTHER" id="PTHR30622:SF4">
    <property type="entry name" value="UNDECAPRENYL-DIPHOSPHATASE"/>
    <property type="match status" value="1"/>
</dbReference>
<dbReference type="Pfam" id="PF02673">
    <property type="entry name" value="BacA"/>
    <property type="match status" value="1"/>
</dbReference>
<organism>
    <name type="scientific">Aliivibrio fischeri (strain MJ11)</name>
    <name type="common">Vibrio fischeri</name>
    <dbReference type="NCBI Taxonomy" id="388396"/>
    <lineage>
        <taxon>Bacteria</taxon>
        <taxon>Pseudomonadati</taxon>
        <taxon>Pseudomonadota</taxon>
        <taxon>Gammaproteobacteria</taxon>
        <taxon>Vibrionales</taxon>
        <taxon>Vibrionaceae</taxon>
        <taxon>Aliivibrio</taxon>
    </lineage>
</organism>
<comment type="function">
    <text evidence="1">Catalyzes the dephosphorylation of undecaprenyl diphosphate (UPP). Confers resistance to bacitracin.</text>
</comment>
<comment type="catalytic activity">
    <reaction evidence="1">
        <text>di-trans,octa-cis-undecaprenyl diphosphate + H2O = di-trans,octa-cis-undecaprenyl phosphate + phosphate + H(+)</text>
        <dbReference type="Rhea" id="RHEA:28094"/>
        <dbReference type="ChEBI" id="CHEBI:15377"/>
        <dbReference type="ChEBI" id="CHEBI:15378"/>
        <dbReference type="ChEBI" id="CHEBI:43474"/>
        <dbReference type="ChEBI" id="CHEBI:58405"/>
        <dbReference type="ChEBI" id="CHEBI:60392"/>
        <dbReference type="EC" id="3.6.1.27"/>
    </reaction>
</comment>
<comment type="subcellular location">
    <subcellularLocation>
        <location evidence="1">Cell inner membrane</location>
        <topology evidence="1">Multi-pass membrane protein</topology>
    </subcellularLocation>
</comment>
<comment type="miscellaneous">
    <text>Bacitracin is thought to be involved in the inhibition of peptidoglycan synthesis by sequestering undecaprenyl diphosphate, thereby reducing the pool of lipid carrier available.</text>
</comment>
<comment type="similarity">
    <text evidence="1">Belongs to the UppP family.</text>
</comment>
<name>UPPP_ALIFM</name>
<gene>
    <name evidence="1" type="primary">uppP</name>
    <name type="ordered locus">VFMJ11_2356</name>
</gene>